<evidence type="ECO:0000255" key="1">
    <source>
        <dbReference type="HAMAP-Rule" id="MF_01331"/>
    </source>
</evidence>
<evidence type="ECO:0000305" key="2"/>
<dbReference type="EMBL" id="CP000114">
    <property type="protein sequence ID" value="ABA45318.1"/>
    <property type="molecule type" value="Genomic_DNA"/>
</dbReference>
<dbReference type="RefSeq" id="WP_000818141.1">
    <property type="nucleotide sequence ID" value="NC_007432.1"/>
</dbReference>
<dbReference type="SMR" id="Q3K3W4"/>
<dbReference type="GeneID" id="66885023"/>
<dbReference type="KEGG" id="sak:SAK_0096"/>
<dbReference type="HOGENOM" id="CLU_083987_3_3_9"/>
<dbReference type="GO" id="GO:0022625">
    <property type="term" value="C:cytosolic large ribosomal subunit"/>
    <property type="evidence" value="ECO:0007669"/>
    <property type="project" value="TreeGrafter"/>
</dbReference>
<dbReference type="GO" id="GO:0019843">
    <property type="term" value="F:rRNA binding"/>
    <property type="evidence" value="ECO:0007669"/>
    <property type="project" value="UniProtKB-UniRule"/>
</dbReference>
<dbReference type="GO" id="GO:0003735">
    <property type="term" value="F:structural constituent of ribosome"/>
    <property type="evidence" value="ECO:0007669"/>
    <property type="project" value="InterPro"/>
</dbReference>
<dbReference type="GO" id="GO:0006412">
    <property type="term" value="P:translation"/>
    <property type="evidence" value="ECO:0007669"/>
    <property type="project" value="UniProtKB-UniRule"/>
</dbReference>
<dbReference type="CDD" id="cd00336">
    <property type="entry name" value="Ribosomal_L22"/>
    <property type="match status" value="1"/>
</dbReference>
<dbReference type="FunFam" id="3.90.470.10:FF:000001">
    <property type="entry name" value="50S ribosomal protein L22"/>
    <property type="match status" value="1"/>
</dbReference>
<dbReference type="Gene3D" id="3.90.470.10">
    <property type="entry name" value="Ribosomal protein L22/L17"/>
    <property type="match status" value="1"/>
</dbReference>
<dbReference type="HAMAP" id="MF_01331_B">
    <property type="entry name" value="Ribosomal_uL22_B"/>
    <property type="match status" value="1"/>
</dbReference>
<dbReference type="InterPro" id="IPR001063">
    <property type="entry name" value="Ribosomal_uL22"/>
</dbReference>
<dbReference type="InterPro" id="IPR005727">
    <property type="entry name" value="Ribosomal_uL22_bac/chlpt-type"/>
</dbReference>
<dbReference type="InterPro" id="IPR047867">
    <property type="entry name" value="Ribosomal_uL22_bac/org-type"/>
</dbReference>
<dbReference type="InterPro" id="IPR018260">
    <property type="entry name" value="Ribosomal_uL22_CS"/>
</dbReference>
<dbReference type="InterPro" id="IPR036394">
    <property type="entry name" value="Ribosomal_uL22_sf"/>
</dbReference>
<dbReference type="NCBIfam" id="TIGR01044">
    <property type="entry name" value="rplV_bact"/>
    <property type="match status" value="1"/>
</dbReference>
<dbReference type="PANTHER" id="PTHR13501">
    <property type="entry name" value="CHLOROPLAST 50S RIBOSOMAL PROTEIN L22-RELATED"/>
    <property type="match status" value="1"/>
</dbReference>
<dbReference type="PANTHER" id="PTHR13501:SF8">
    <property type="entry name" value="LARGE RIBOSOMAL SUBUNIT PROTEIN UL22M"/>
    <property type="match status" value="1"/>
</dbReference>
<dbReference type="Pfam" id="PF00237">
    <property type="entry name" value="Ribosomal_L22"/>
    <property type="match status" value="1"/>
</dbReference>
<dbReference type="SUPFAM" id="SSF54843">
    <property type="entry name" value="Ribosomal protein L22"/>
    <property type="match status" value="1"/>
</dbReference>
<dbReference type="PROSITE" id="PS00464">
    <property type="entry name" value="RIBOSOMAL_L22"/>
    <property type="match status" value="1"/>
</dbReference>
<keyword id="KW-0687">Ribonucleoprotein</keyword>
<keyword id="KW-0689">Ribosomal protein</keyword>
<keyword id="KW-0694">RNA-binding</keyword>
<keyword id="KW-0699">rRNA-binding</keyword>
<name>RL22_STRA1</name>
<proteinExistence type="inferred from homology"/>
<comment type="function">
    <text evidence="1">This protein binds specifically to 23S rRNA; its binding is stimulated by other ribosomal proteins, e.g. L4, L17, and L20. It is important during the early stages of 50S assembly. It makes multiple contacts with different domains of the 23S rRNA in the assembled 50S subunit and ribosome (By similarity).</text>
</comment>
<comment type="function">
    <text evidence="1">The globular domain of the protein is located near the polypeptide exit tunnel on the outside of the subunit, while an extended beta-hairpin is found that lines the wall of the exit tunnel in the center of the 70S ribosome.</text>
</comment>
<comment type="subunit">
    <text evidence="1">Part of the 50S ribosomal subunit.</text>
</comment>
<comment type="similarity">
    <text evidence="1">Belongs to the universal ribosomal protein uL22 family.</text>
</comment>
<feature type="chain" id="PRO_0000243211" description="Large ribosomal subunit protein uL22">
    <location>
        <begin position="1"/>
        <end position="114"/>
    </location>
</feature>
<protein>
    <recommendedName>
        <fullName evidence="1">Large ribosomal subunit protein uL22</fullName>
    </recommendedName>
    <alternativeName>
        <fullName evidence="2">50S ribosomal protein L22</fullName>
    </alternativeName>
</protein>
<organism>
    <name type="scientific">Streptococcus agalactiae serotype Ia (strain ATCC 27591 / A909 / CDC SS700)</name>
    <dbReference type="NCBI Taxonomy" id="205921"/>
    <lineage>
        <taxon>Bacteria</taxon>
        <taxon>Bacillati</taxon>
        <taxon>Bacillota</taxon>
        <taxon>Bacilli</taxon>
        <taxon>Lactobacillales</taxon>
        <taxon>Streptococcaceae</taxon>
        <taxon>Streptococcus</taxon>
    </lineage>
</organism>
<reference key="1">
    <citation type="journal article" date="2005" name="Proc. Natl. Acad. Sci. U.S.A.">
        <title>Genome analysis of multiple pathogenic isolates of Streptococcus agalactiae: implications for the microbial 'pan-genome'.</title>
        <authorList>
            <person name="Tettelin H."/>
            <person name="Masignani V."/>
            <person name="Cieslewicz M.J."/>
            <person name="Donati C."/>
            <person name="Medini D."/>
            <person name="Ward N.L."/>
            <person name="Angiuoli S.V."/>
            <person name="Crabtree J."/>
            <person name="Jones A.L."/>
            <person name="Durkin A.S."/>
            <person name="DeBoy R.T."/>
            <person name="Davidsen T.M."/>
            <person name="Mora M."/>
            <person name="Scarselli M."/>
            <person name="Margarit y Ros I."/>
            <person name="Peterson J.D."/>
            <person name="Hauser C.R."/>
            <person name="Sundaram J.P."/>
            <person name="Nelson W.C."/>
            <person name="Madupu R."/>
            <person name="Brinkac L.M."/>
            <person name="Dodson R.J."/>
            <person name="Rosovitz M.J."/>
            <person name="Sullivan S.A."/>
            <person name="Daugherty S.C."/>
            <person name="Haft D.H."/>
            <person name="Selengut J."/>
            <person name="Gwinn M.L."/>
            <person name="Zhou L."/>
            <person name="Zafar N."/>
            <person name="Khouri H."/>
            <person name="Radune D."/>
            <person name="Dimitrov G."/>
            <person name="Watkins K."/>
            <person name="O'Connor K.J."/>
            <person name="Smith S."/>
            <person name="Utterback T.R."/>
            <person name="White O."/>
            <person name="Rubens C.E."/>
            <person name="Grandi G."/>
            <person name="Madoff L.C."/>
            <person name="Kasper D.L."/>
            <person name="Telford J.L."/>
            <person name="Wessels M.R."/>
            <person name="Rappuoli R."/>
            <person name="Fraser C.M."/>
        </authorList>
    </citation>
    <scope>NUCLEOTIDE SEQUENCE [LARGE SCALE GENOMIC DNA]</scope>
    <source>
        <strain>ATCC 27591 / A909 / CDC SS700</strain>
    </source>
</reference>
<accession>Q3K3W4</accession>
<sequence>MAEITSAKAMARTVRVSPRKTRLVLDLIRGKNVADAIAILKFTPNKAARVIEKTLNSAIANAENNFGLEKANLVVSETFANEGPTMKRFRPRAKGSASPINKRTTHVTVVVSEK</sequence>
<gene>
    <name evidence="1" type="primary">rplV</name>
    <name type="ordered locus">SAK_0096</name>
</gene>